<proteinExistence type="inferred from homology"/>
<dbReference type="EMBL" id="M60180">
    <property type="status" value="NOT_ANNOTATED_CDS"/>
    <property type="molecule type" value="Genomic_DNA"/>
</dbReference>
<dbReference type="SMR" id="P42343"/>
<dbReference type="GO" id="GO:0009507">
    <property type="term" value="C:chloroplast"/>
    <property type="evidence" value="ECO:0007669"/>
    <property type="project" value="UniProtKB-SubCell"/>
</dbReference>
<dbReference type="GO" id="GO:1990904">
    <property type="term" value="C:ribonucleoprotein complex"/>
    <property type="evidence" value="ECO:0007669"/>
    <property type="project" value="UniProtKB-KW"/>
</dbReference>
<dbReference type="GO" id="GO:0005840">
    <property type="term" value="C:ribosome"/>
    <property type="evidence" value="ECO:0007669"/>
    <property type="project" value="UniProtKB-KW"/>
</dbReference>
<dbReference type="GO" id="GO:0019843">
    <property type="term" value="F:rRNA binding"/>
    <property type="evidence" value="ECO:0007669"/>
    <property type="project" value="UniProtKB-KW"/>
</dbReference>
<dbReference type="GO" id="GO:0003735">
    <property type="term" value="F:structural constituent of ribosome"/>
    <property type="evidence" value="ECO:0007669"/>
    <property type="project" value="InterPro"/>
</dbReference>
<dbReference type="GO" id="GO:0006412">
    <property type="term" value="P:translation"/>
    <property type="evidence" value="ECO:0007669"/>
    <property type="project" value="InterPro"/>
</dbReference>
<dbReference type="FunFam" id="3.30.1370.30:FF:000004">
    <property type="entry name" value="30S ribosomal protein S8, chloroplastic"/>
    <property type="match status" value="1"/>
</dbReference>
<dbReference type="Gene3D" id="3.30.1370.30">
    <property type="match status" value="1"/>
</dbReference>
<dbReference type="InterPro" id="IPR000630">
    <property type="entry name" value="Ribosomal_uS8"/>
</dbReference>
<dbReference type="InterPro" id="IPR035987">
    <property type="entry name" value="Ribosomal_uS8_sf"/>
</dbReference>
<dbReference type="Pfam" id="PF00410">
    <property type="entry name" value="Ribosomal_S8"/>
    <property type="match status" value="1"/>
</dbReference>
<dbReference type="SUPFAM" id="SSF56047">
    <property type="entry name" value="Ribosomal protein S8"/>
    <property type="match status" value="1"/>
</dbReference>
<protein>
    <recommendedName>
        <fullName evidence="2">Small ribosomal subunit protein uS8c</fullName>
    </recommendedName>
    <alternativeName>
        <fullName>30S ribosomal protein S8, chloroplastic</fullName>
    </alternativeName>
</protein>
<sequence length="74" mass="8628">MGRDTIADIITSIRNVDMNRKGTVRIESTNMAEKIVKILLREGFIENVRKHQENKKSFLVLTLRHRRNRKGPSP</sequence>
<comment type="function">
    <text evidence="1">One of the primary rRNA binding proteins, it binds directly to 16S rRNA central domain where it helps coordinate assembly of the platform of the 30S subunit.</text>
</comment>
<comment type="subunit">
    <text evidence="1">Part of the 30S ribosomal subunit.</text>
</comment>
<comment type="subcellular location">
    <subcellularLocation>
        <location>Plastid</location>
        <location>Chloroplast</location>
    </subcellularLocation>
</comment>
<comment type="similarity">
    <text evidence="2">Belongs to the universal ribosomal protein uS8 family.</text>
</comment>
<reference key="1">
    <citation type="journal article" date="1991" name="Mol. Biol. Evol.">
        <title>Evidence for replication slippage in the evolution of Oenothera chloroplast DNA.</title>
        <authorList>
            <person name="Wolfson R."/>
            <person name="Higgins K.G."/>
            <person name="Sears B.B."/>
        </authorList>
    </citation>
    <scope>NUCLEOTIDE SEQUENCE [GENOMIC DNA]</scope>
</reference>
<organism>
    <name type="scientific">Oenothera ammophila</name>
    <name type="common">Evening primerose</name>
    <dbReference type="NCBI Taxonomy" id="3949"/>
    <lineage>
        <taxon>Eukaryota</taxon>
        <taxon>Viridiplantae</taxon>
        <taxon>Streptophyta</taxon>
        <taxon>Embryophyta</taxon>
        <taxon>Tracheophyta</taxon>
        <taxon>Spermatophyta</taxon>
        <taxon>Magnoliopsida</taxon>
        <taxon>eudicotyledons</taxon>
        <taxon>Gunneridae</taxon>
        <taxon>Pentapetalae</taxon>
        <taxon>rosids</taxon>
        <taxon>malvids</taxon>
        <taxon>Myrtales</taxon>
        <taxon>Onagraceae</taxon>
        <taxon>Onagroideae</taxon>
        <taxon>Onagreae</taxon>
        <taxon>Oenothera</taxon>
    </lineage>
</organism>
<gene>
    <name type="primary">rps8</name>
</gene>
<accession>P42343</accession>
<geneLocation type="chloroplast"/>
<name>RR8_OENAM</name>
<feature type="chain" id="PRO_0000126582" description="Small ribosomal subunit protein uS8c">
    <location>
        <begin position="1"/>
        <end position="74" status="greater than"/>
    </location>
</feature>
<feature type="non-terminal residue">
    <location>
        <position position="74"/>
    </location>
</feature>
<evidence type="ECO:0000250" key="1"/>
<evidence type="ECO:0000305" key="2"/>
<keyword id="KW-0150">Chloroplast</keyword>
<keyword id="KW-0934">Plastid</keyword>
<keyword id="KW-0687">Ribonucleoprotein</keyword>
<keyword id="KW-0689">Ribosomal protein</keyword>
<keyword id="KW-0694">RNA-binding</keyword>
<keyword id="KW-0699">rRNA-binding</keyword>